<keyword id="KW-0119">Carbohydrate metabolism</keyword>
<keyword id="KW-0963">Cytoplasm</keyword>
<keyword id="KW-0299">Galactose metabolism</keyword>
<keyword id="KW-0328">Glycosyltransferase</keyword>
<keyword id="KW-0464">Manganese</keyword>
<keyword id="KW-0479">Metal-binding</keyword>
<keyword id="KW-1185">Reference proteome</keyword>
<keyword id="KW-0808">Transferase</keyword>
<accession>F4KED2</accession>
<feature type="chain" id="PRO_0000418664" description="Galactinol synthase 10">
    <location>
        <begin position="1"/>
        <end position="328"/>
    </location>
</feature>
<feature type="active site" evidence="1">
    <location>
        <position position="106"/>
    </location>
</feature>
<feature type="binding site" evidence="1">
    <location>
        <position position="122"/>
    </location>
    <ligand>
        <name>Mn(2+)</name>
        <dbReference type="ChEBI" id="CHEBI:29035"/>
    </ligand>
</feature>
<feature type="binding site" evidence="1">
    <location>
        <position position="124"/>
    </location>
    <ligand>
        <name>Mn(2+)</name>
        <dbReference type="ChEBI" id="CHEBI:29035"/>
    </ligand>
</feature>
<feature type="binding site" evidence="1">
    <location>
        <position position="248"/>
    </location>
    <ligand>
        <name>Mn(2+)</name>
        <dbReference type="ChEBI" id="CHEBI:29035"/>
    </ligand>
</feature>
<comment type="function">
    <text evidence="1">Galactinol synthase involved in the biosynthesis of raffinose family oligosaccharides (RFOs) that function as osmoprotectants. May promote plant stress tolerance (By similarity).</text>
</comment>
<comment type="catalytic activity">
    <reaction>
        <text>myo-inositol + UDP-alpha-D-galactose = alpha-D-galactosyl-(1-&gt;3)-1D-myo-inositol + UDP + H(+)</text>
        <dbReference type="Rhea" id="RHEA:12464"/>
        <dbReference type="ChEBI" id="CHEBI:15378"/>
        <dbReference type="ChEBI" id="CHEBI:17268"/>
        <dbReference type="ChEBI" id="CHEBI:17505"/>
        <dbReference type="ChEBI" id="CHEBI:58223"/>
        <dbReference type="ChEBI" id="CHEBI:66914"/>
        <dbReference type="EC" id="2.4.1.123"/>
    </reaction>
</comment>
<comment type="cofactor">
    <cofactor evidence="1">
        <name>a divalent metal cation</name>
        <dbReference type="ChEBI" id="CHEBI:60240"/>
    </cofactor>
</comment>
<comment type="subcellular location">
    <subcellularLocation>
        <location evidence="2">Cytoplasm</location>
    </subcellularLocation>
</comment>
<comment type="similarity">
    <text evidence="2">Belongs to the glycosyltransferase 8 family. Galactosyltransferase subfamily.</text>
</comment>
<proteinExistence type="inferred from homology"/>
<dbReference type="EC" id="2.4.1.123"/>
<dbReference type="EMBL" id="AC069554">
    <property type="status" value="NOT_ANNOTATED_CDS"/>
    <property type="molecule type" value="Genomic_DNA"/>
</dbReference>
<dbReference type="EMBL" id="CP002688">
    <property type="protein sequence ID" value="AED93876.1"/>
    <property type="molecule type" value="Genomic_DNA"/>
</dbReference>
<dbReference type="RefSeq" id="NP_850902.1">
    <property type="nucleotide sequence ID" value="NM_180571.2"/>
</dbReference>
<dbReference type="SMR" id="F4KED2"/>
<dbReference type="FunCoup" id="F4KED2">
    <property type="interactions" value="208"/>
</dbReference>
<dbReference type="STRING" id="3702.F4KED2"/>
<dbReference type="CAZy" id="GT8">
    <property type="family name" value="Glycosyltransferase Family 8"/>
</dbReference>
<dbReference type="PaxDb" id="3702-AT5G30500.1"/>
<dbReference type="EnsemblPlants" id="AT5G30500.1">
    <property type="protein sequence ID" value="AT5G30500.1"/>
    <property type="gene ID" value="AT5G30500"/>
</dbReference>
<dbReference type="GeneID" id="833137"/>
<dbReference type="Gramene" id="AT5G30500.1">
    <property type="protein sequence ID" value="AT5G30500.1"/>
    <property type="gene ID" value="AT5G30500"/>
</dbReference>
<dbReference type="KEGG" id="ath:AT5G30500"/>
<dbReference type="Araport" id="AT5G30500"/>
<dbReference type="TAIR" id="AT5G30500">
    <property type="gene designation" value="GOLS10"/>
</dbReference>
<dbReference type="eggNOG" id="KOG1950">
    <property type="taxonomic scope" value="Eukaryota"/>
</dbReference>
<dbReference type="HOGENOM" id="CLU_049943_3_0_1"/>
<dbReference type="InParanoid" id="F4KED2"/>
<dbReference type="OMA" id="KSAYPLM"/>
<dbReference type="PhylomeDB" id="F4KED2"/>
<dbReference type="PRO" id="PR:F4KED2"/>
<dbReference type="Proteomes" id="UP000006548">
    <property type="component" value="Chromosome 5"/>
</dbReference>
<dbReference type="ExpressionAtlas" id="F4KED2">
    <property type="expression patterns" value="baseline and differential"/>
</dbReference>
<dbReference type="GO" id="GO:0005737">
    <property type="term" value="C:cytoplasm"/>
    <property type="evidence" value="ECO:0007669"/>
    <property type="project" value="UniProtKB-SubCell"/>
</dbReference>
<dbReference type="GO" id="GO:0047216">
    <property type="term" value="F:inositol 3-alpha-galactosyltransferase activity"/>
    <property type="evidence" value="ECO:0000250"/>
    <property type="project" value="UniProtKB"/>
</dbReference>
<dbReference type="GO" id="GO:0046872">
    <property type="term" value="F:metal ion binding"/>
    <property type="evidence" value="ECO:0007669"/>
    <property type="project" value="UniProtKB-KW"/>
</dbReference>
<dbReference type="GO" id="GO:0006012">
    <property type="term" value="P:galactose metabolic process"/>
    <property type="evidence" value="ECO:0000250"/>
    <property type="project" value="UniProtKB"/>
</dbReference>
<dbReference type="CDD" id="cd02537">
    <property type="entry name" value="GT8_Glycogenin"/>
    <property type="match status" value="1"/>
</dbReference>
<dbReference type="FunFam" id="3.90.550.10:FF:000049">
    <property type="entry name" value="Hexosyltransferase"/>
    <property type="match status" value="1"/>
</dbReference>
<dbReference type="Gene3D" id="3.90.550.10">
    <property type="entry name" value="Spore Coat Polysaccharide Biosynthesis Protein SpsA, Chain A"/>
    <property type="match status" value="1"/>
</dbReference>
<dbReference type="InterPro" id="IPR002495">
    <property type="entry name" value="Glyco_trans_8"/>
</dbReference>
<dbReference type="InterPro" id="IPR050587">
    <property type="entry name" value="GNT1/Glycosyltrans_8"/>
</dbReference>
<dbReference type="InterPro" id="IPR029044">
    <property type="entry name" value="Nucleotide-diphossugar_trans"/>
</dbReference>
<dbReference type="PANTHER" id="PTHR11183">
    <property type="entry name" value="GLYCOGENIN SUBFAMILY MEMBER"/>
    <property type="match status" value="1"/>
</dbReference>
<dbReference type="Pfam" id="PF01501">
    <property type="entry name" value="Glyco_transf_8"/>
    <property type="match status" value="1"/>
</dbReference>
<dbReference type="SUPFAM" id="SSF53448">
    <property type="entry name" value="Nucleotide-diphospho-sugar transferases"/>
    <property type="match status" value="1"/>
</dbReference>
<organism>
    <name type="scientific">Arabidopsis thaliana</name>
    <name type="common">Mouse-ear cress</name>
    <dbReference type="NCBI Taxonomy" id="3702"/>
    <lineage>
        <taxon>Eukaryota</taxon>
        <taxon>Viridiplantae</taxon>
        <taxon>Streptophyta</taxon>
        <taxon>Embryophyta</taxon>
        <taxon>Tracheophyta</taxon>
        <taxon>Spermatophyta</taxon>
        <taxon>Magnoliopsida</taxon>
        <taxon>eudicotyledons</taxon>
        <taxon>Gunneridae</taxon>
        <taxon>Pentapetalae</taxon>
        <taxon>rosids</taxon>
        <taxon>malvids</taxon>
        <taxon>Brassicales</taxon>
        <taxon>Brassicaceae</taxon>
        <taxon>Camelineae</taxon>
        <taxon>Arabidopsis</taxon>
    </lineage>
</organism>
<gene>
    <name type="primary">GOLS10</name>
    <name type="ordered locus">At5g30500</name>
    <name type="ORF">F19I11</name>
</gene>
<protein>
    <recommendedName>
        <fullName>Galactinol synthase 10</fullName>
        <shortName>AtGolS10</shortName>
        <shortName>GolS-10</shortName>
        <ecNumber>2.4.1.123</ecNumber>
    </recommendedName>
</protein>
<sequence>MAPTEMNIERKVEADVAVIPNDGKRAYVTFLAGNQDYWMGVVGLAKGLRKVKAAYPLVVAMLPDVPKEHRQILVAQGCIIREIEPVYPPENQAGYAMAYYVINYSKLRIWEFVEYEKMIYLDGDIQVFSNIDHLFDTPSGYLYAVKDCFCEGSWSKTPQYKIGYCQQSPEKVRWPMNSLGHVPPLYFNAGMLVFEPNLLTYEDLLQTVQVTTPTSFAEQPIPSTYNLVLAMLWRHPECIDLDQINVVHYCAKGSKPWRFTGEEEHMDREDIKMLVKKWWDIYEDTSLDYKTFVENESKLNPIVAALASKESGCDGLTSLAPSAAKSNP</sequence>
<reference key="1">
    <citation type="journal article" date="2000" name="Nature">
        <title>Sequence and analysis of chromosome 5 of the plant Arabidopsis thaliana.</title>
        <authorList>
            <person name="Tabata S."/>
            <person name="Kaneko T."/>
            <person name="Nakamura Y."/>
            <person name="Kotani H."/>
            <person name="Kato T."/>
            <person name="Asamizu E."/>
            <person name="Miyajima N."/>
            <person name="Sasamoto S."/>
            <person name="Kimura T."/>
            <person name="Hosouchi T."/>
            <person name="Kawashima K."/>
            <person name="Kohara M."/>
            <person name="Matsumoto M."/>
            <person name="Matsuno A."/>
            <person name="Muraki A."/>
            <person name="Nakayama S."/>
            <person name="Nakazaki N."/>
            <person name="Naruo K."/>
            <person name="Okumura S."/>
            <person name="Shinpo S."/>
            <person name="Takeuchi C."/>
            <person name="Wada T."/>
            <person name="Watanabe A."/>
            <person name="Yamada M."/>
            <person name="Yasuda M."/>
            <person name="Sato S."/>
            <person name="de la Bastide M."/>
            <person name="Huang E."/>
            <person name="Spiegel L."/>
            <person name="Gnoj L."/>
            <person name="O'Shaughnessy A."/>
            <person name="Preston R."/>
            <person name="Habermann K."/>
            <person name="Murray J."/>
            <person name="Johnson D."/>
            <person name="Rohlfing T."/>
            <person name="Nelson J."/>
            <person name="Stoneking T."/>
            <person name="Pepin K."/>
            <person name="Spieth J."/>
            <person name="Sekhon M."/>
            <person name="Armstrong J."/>
            <person name="Becker M."/>
            <person name="Belter E."/>
            <person name="Cordum H."/>
            <person name="Cordes M."/>
            <person name="Courtney L."/>
            <person name="Courtney W."/>
            <person name="Dante M."/>
            <person name="Du H."/>
            <person name="Edwards J."/>
            <person name="Fryman J."/>
            <person name="Haakensen B."/>
            <person name="Lamar E."/>
            <person name="Latreille P."/>
            <person name="Leonard S."/>
            <person name="Meyer R."/>
            <person name="Mulvaney E."/>
            <person name="Ozersky P."/>
            <person name="Riley A."/>
            <person name="Strowmatt C."/>
            <person name="Wagner-McPherson C."/>
            <person name="Wollam A."/>
            <person name="Yoakum M."/>
            <person name="Bell M."/>
            <person name="Dedhia N."/>
            <person name="Parnell L."/>
            <person name="Shah R."/>
            <person name="Rodriguez M."/>
            <person name="Hoon See L."/>
            <person name="Vil D."/>
            <person name="Baker J."/>
            <person name="Kirchoff K."/>
            <person name="Toth K."/>
            <person name="King L."/>
            <person name="Bahret A."/>
            <person name="Miller B."/>
            <person name="Marra M.A."/>
            <person name="Martienssen R."/>
            <person name="McCombie W.R."/>
            <person name="Wilson R.K."/>
            <person name="Murphy G."/>
            <person name="Bancroft I."/>
            <person name="Volckaert G."/>
            <person name="Wambutt R."/>
            <person name="Duesterhoeft A."/>
            <person name="Stiekema W."/>
            <person name="Pohl T."/>
            <person name="Entian K.-D."/>
            <person name="Terryn N."/>
            <person name="Hartley N."/>
            <person name="Bent E."/>
            <person name="Johnson S."/>
            <person name="Langham S.-A."/>
            <person name="McCullagh B."/>
            <person name="Robben J."/>
            <person name="Grymonprez B."/>
            <person name="Zimmermann W."/>
            <person name="Ramsperger U."/>
            <person name="Wedler H."/>
            <person name="Balke K."/>
            <person name="Wedler E."/>
            <person name="Peters S."/>
            <person name="van Staveren M."/>
            <person name="Dirkse W."/>
            <person name="Mooijman P."/>
            <person name="Klein Lankhorst R."/>
            <person name="Weitzenegger T."/>
            <person name="Bothe G."/>
            <person name="Rose M."/>
            <person name="Hauf J."/>
            <person name="Berneiser S."/>
            <person name="Hempel S."/>
            <person name="Feldpausch M."/>
            <person name="Lamberth S."/>
            <person name="Villarroel R."/>
            <person name="Gielen J."/>
            <person name="Ardiles W."/>
            <person name="Bents O."/>
            <person name="Lemcke K."/>
            <person name="Kolesov G."/>
            <person name="Mayer K.F.X."/>
            <person name="Rudd S."/>
            <person name="Schoof H."/>
            <person name="Schueller C."/>
            <person name="Zaccaria P."/>
            <person name="Mewes H.-W."/>
            <person name="Bevan M."/>
            <person name="Fransz P.F."/>
        </authorList>
    </citation>
    <scope>NUCLEOTIDE SEQUENCE [LARGE SCALE GENOMIC DNA]</scope>
    <source>
        <strain>cv. Columbia</strain>
    </source>
</reference>
<reference key="2">
    <citation type="journal article" date="2017" name="Plant J.">
        <title>Araport11: a complete reannotation of the Arabidopsis thaliana reference genome.</title>
        <authorList>
            <person name="Cheng C.Y."/>
            <person name="Krishnakumar V."/>
            <person name="Chan A.P."/>
            <person name="Thibaud-Nissen F."/>
            <person name="Schobel S."/>
            <person name="Town C.D."/>
        </authorList>
    </citation>
    <scope>GENOME REANNOTATION</scope>
    <source>
        <strain>cv. Columbia</strain>
    </source>
</reference>
<reference key="3">
    <citation type="journal article" date="2008" name="Plant Physiol.">
        <title>Galactinol and raffinose constitute a novel function to protect plants from oxidative damage.</title>
        <authorList>
            <person name="Nishizawa A."/>
            <person name="Yabuta Y."/>
            <person name="Shigeoka S."/>
        </authorList>
    </citation>
    <scope>GENE FAMILY</scope>
    <scope>NOMENCLATURE</scope>
</reference>
<evidence type="ECO:0000250" key="1"/>
<evidence type="ECO:0000305" key="2"/>
<name>GOLSA_ARATH</name>